<reference key="1">
    <citation type="journal article" date="2002" name="Genome Res.">
        <title>The genome of Methanosarcina acetivorans reveals extensive metabolic and physiological diversity.</title>
        <authorList>
            <person name="Galagan J.E."/>
            <person name="Nusbaum C."/>
            <person name="Roy A."/>
            <person name="Endrizzi M.G."/>
            <person name="Macdonald P."/>
            <person name="FitzHugh W."/>
            <person name="Calvo S."/>
            <person name="Engels R."/>
            <person name="Smirnov S."/>
            <person name="Atnoor D."/>
            <person name="Brown A."/>
            <person name="Allen N."/>
            <person name="Naylor J."/>
            <person name="Stange-Thomann N."/>
            <person name="DeArellano K."/>
            <person name="Johnson R."/>
            <person name="Linton L."/>
            <person name="McEwan P."/>
            <person name="McKernan K."/>
            <person name="Talamas J."/>
            <person name="Tirrell A."/>
            <person name="Ye W."/>
            <person name="Zimmer A."/>
            <person name="Barber R.D."/>
            <person name="Cann I."/>
            <person name="Graham D.E."/>
            <person name="Grahame D.A."/>
            <person name="Guss A.M."/>
            <person name="Hedderich R."/>
            <person name="Ingram-Smith C."/>
            <person name="Kuettner H.C."/>
            <person name="Krzycki J.A."/>
            <person name="Leigh J.A."/>
            <person name="Li W."/>
            <person name="Liu J."/>
            <person name="Mukhopadhyay B."/>
            <person name="Reeve J.N."/>
            <person name="Smith K."/>
            <person name="Springer T.A."/>
            <person name="Umayam L.A."/>
            <person name="White O."/>
            <person name="White R.H."/>
            <person name="de Macario E.C."/>
            <person name="Ferry J.G."/>
            <person name="Jarrell K.F."/>
            <person name="Jing H."/>
            <person name="Macario A.J.L."/>
            <person name="Paulsen I.T."/>
            <person name="Pritchett M."/>
            <person name="Sowers K.R."/>
            <person name="Swanson R.V."/>
            <person name="Zinder S.H."/>
            <person name="Lander E."/>
            <person name="Metcalf W.W."/>
            <person name="Birren B."/>
        </authorList>
    </citation>
    <scope>NUCLEOTIDE SEQUENCE [LARGE SCALE GENOMIC DNA]</scope>
    <source>
        <strain>ATCC 35395 / DSM 2834 / JCM 12185 / C2A</strain>
    </source>
</reference>
<sequence length="72" mass="8040">MANRPLDILNNALDTPVIVRLKGAREFRGELKGYDIHMNLVLDNAEELRDGEVVSKFSSVVIRGDNVVYVSP</sequence>
<accession>Q8TL47</accession>
<comment type="similarity">
    <text evidence="1">Belongs to the snRNP Sm proteins family.</text>
</comment>
<proteinExistence type="inferred from homology"/>
<name>RUXX_METAC</name>
<feature type="chain" id="PRO_0000125593" description="Putative snRNP Sm-like protein">
    <location>
        <begin position="1"/>
        <end position="72"/>
    </location>
</feature>
<feature type="domain" description="Sm" evidence="2">
    <location>
        <begin position="4"/>
        <end position="72"/>
    </location>
</feature>
<dbReference type="EMBL" id="AE010299">
    <property type="protein sequence ID" value="AAM06566.1"/>
    <property type="molecule type" value="Genomic_DNA"/>
</dbReference>
<dbReference type="RefSeq" id="WP_011023130.1">
    <property type="nucleotide sequence ID" value="NC_003552.1"/>
</dbReference>
<dbReference type="SMR" id="Q8TL47"/>
<dbReference type="STRING" id="188937.MA_3195"/>
<dbReference type="EnsemblBacteria" id="AAM06566">
    <property type="protein sequence ID" value="AAM06566"/>
    <property type="gene ID" value="MA_3195"/>
</dbReference>
<dbReference type="GeneID" id="24807223"/>
<dbReference type="KEGG" id="mac:MA_3195"/>
<dbReference type="HOGENOM" id="CLU_076902_11_1_2"/>
<dbReference type="InParanoid" id="Q8TL47"/>
<dbReference type="OrthoDB" id="371816at2157"/>
<dbReference type="PhylomeDB" id="Q8TL47"/>
<dbReference type="Proteomes" id="UP000002487">
    <property type="component" value="Chromosome"/>
</dbReference>
<dbReference type="GO" id="GO:1990904">
    <property type="term" value="C:ribonucleoprotein complex"/>
    <property type="evidence" value="ECO:0000318"/>
    <property type="project" value="GO_Central"/>
</dbReference>
<dbReference type="GO" id="GO:0003723">
    <property type="term" value="F:RNA binding"/>
    <property type="evidence" value="ECO:0007669"/>
    <property type="project" value="InterPro"/>
</dbReference>
<dbReference type="CDD" id="cd01731">
    <property type="entry name" value="archaeal_Sm1"/>
    <property type="match status" value="1"/>
</dbReference>
<dbReference type="Gene3D" id="2.30.30.100">
    <property type="match status" value="1"/>
</dbReference>
<dbReference type="HAMAP" id="MF_00257">
    <property type="entry name" value="Lsm_RuxX"/>
    <property type="match status" value="1"/>
</dbReference>
<dbReference type="InterPro" id="IPR044641">
    <property type="entry name" value="Lsm7/SmG-like"/>
</dbReference>
<dbReference type="InterPro" id="IPR010920">
    <property type="entry name" value="LSM_dom_sf"/>
</dbReference>
<dbReference type="InterPro" id="IPR047575">
    <property type="entry name" value="Sm"/>
</dbReference>
<dbReference type="InterPro" id="IPR001163">
    <property type="entry name" value="Sm_dom_euk/arc"/>
</dbReference>
<dbReference type="InterPro" id="IPR022901">
    <property type="entry name" value="snRNP_Sm-like_arc"/>
</dbReference>
<dbReference type="NCBIfam" id="NF001963">
    <property type="entry name" value="PRK00737.1"/>
    <property type="match status" value="1"/>
</dbReference>
<dbReference type="PANTHER" id="PTHR10553">
    <property type="entry name" value="SMALL NUCLEAR RIBONUCLEOPROTEIN"/>
    <property type="match status" value="1"/>
</dbReference>
<dbReference type="PANTHER" id="PTHR10553:SF5">
    <property type="entry name" value="U6 SNRNA-ASSOCIATED SM-LIKE PROTEIN LSM7"/>
    <property type="match status" value="1"/>
</dbReference>
<dbReference type="Pfam" id="PF01423">
    <property type="entry name" value="LSM"/>
    <property type="match status" value="1"/>
</dbReference>
<dbReference type="SMART" id="SM00651">
    <property type="entry name" value="Sm"/>
    <property type="match status" value="1"/>
</dbReference>
<dbReference type="SUPFAM" id="SSF50182">
    <property type="entry name" value="Sm-like ribonucleoproteins"/>
    <property type="match status" value="1"/>
</dbReference>
<dbReference type="PROSITE" id="PS52002">
    <property type="entry name" value="SM"/>
    <property type="match status" value="1"/>
</dbReference>
<protein>
    <recommendedName>
        <fullName evidence="1">Putative snRNP Sm-like protein</fullName>
    </recommendedName>
</protein>
<organism>
    <name type="scientific">Methanosarcina acetivorans (strain ATCC 35395 / DSM 2834 / JCM 12185 / C2A)</name>
    <dbReference type="NCBI Taxonomy" id="188937"/>
    <lineage>
        <taxon>Archaea</taxon>
        <taxon>Methanobacteriati</taxon>
        <taxon>Methanobacteriota</taxon>
        <taxon>Stenosarchaea group</taxon>
        <taxon>Methanomicrobia</taxon>
        <taxon>Methanosarcinales</taxon>
        <taxon>Methanosarcinaceae</taxon>
        <taxon>Methanosarcina</taxon>
    </lineage>
</organism>
<evidence type="ECO:0000255" key="1">
    <source>
        <dbReference type="HAMAP-Rule" id="MF_00257"/>
    </source>
</evidence>
<evidence type="ECO:0000255" key="2">
    <source>
        <dbReference type="PROSITE-ProRule" id="PRU01346"/>
    </source>
</evidence>
<gene>
    <name type="ordered locus">MA_3195</name>
</gene>
<keyword id="KW-1185">Reference proteome</keyword>
<keyword id="KW-0687">Ribonucleoprotein</keyword>